<sequence>MLYFVGRIYGYEVVNYTNNILIIRKNKGSSVPKQFVGIYELIEEHDEYMKLRREMDLSNALINVKGKIITAKNSTITRASMFNPFDTLIVEKRRNLRGVKKTIVIKKGITAILKQQQNTMIIRIAKSLHNKKPIPLAPDTDWFEIIS</sequence>
<reference key="1">
    <citation type="journal article" date="2005" name="Nature">
        <title>Virology: independent virus development outside a host.</title>
        <authorList>
            <person name="Haring M."/>
            <person name="Vestergaard G."/>
            <person name="Rachel R."/>
            <person name="Chen L."/>
            <person name="Garrett R.A."/>
            <person name="Prangishvili D."/>
        </authorList>
    </citation>
    <scope>NUCLEOTIDE SEQUENCE [GENOMIC DNA]</scope>
</reference>
<keyword id="KW-1185">Reference proteome</keyword>
<protein>
    <recommendedName>
        <fullName>Uncharacterized protein ORF147</fullName>
    </recommendedName>
</protein>
<accession>Q3V4R3</accession>
<proteinExistence type="predicted"/>
<organismHost>
    <name type="scientific">Acidianus convivator</name>
    <dbReference type="NCBI Taxonomy" id="269667"/>
</organismHost>
<dbReference type="EMBL" id="AJ888457">
    <property type="protein sequence ID" value="CAI59901.1"/>
    <property type="molecule type" value="Genomic_DNA"/>
</dbReference>
<dbReference type="RefSeq" id="YP_319878.1">
    <property type="nucleotide sequence ID" value="NC_007409.1"/>
</dbReference>
<dbReference type="GeneID" id="4484257"/>
<dbReference type="KEGG" id="vg:4484257"/>
<dbReference type="Proteomes" id="UP000002150">
    <property type="component" value="Genome"/>
</dbReference>
<feature type="chain" id="PRO_0000389079" description="Uncharacterized protein ORF147">
    <location>
        <begin position="1"/>
        <end position="147"/>
    </location>
</feature>
<name>Y147_ATV</name>
<organism>
    <name type="scientific">Acidianus two-tailed virus</name>
    <name type="common">ATV</name>
    <dbReference type="NCBI Taxonomy" id="315953"/>
    <lineage>
        <taxon>Viruses</taxon>
        <taxon>Viruses incertae sedis</taxon>
        <taxon>Bicaudaviridae</taxon>
        <taxon>Bicaudavirus</taxon>
    </lineage>
</organism>